<proteinExistence type="inferred from homology"/>
<gene>
    <name evidence="1" type="primary">flgH</name>
    <name type="ordered locus">AZC_0630</name>
</gene>
<accession>A8IPJ4</accession>
<organism>
    <name type="scientific">Azorhizobium caulinodans (strain ATCC 43989 / DSM 5975 / JCM 20966 / LMG 6465 / NBRC 14845 / NCIMB 13405 / ORS 571)</name>
    <dbReference type="NCBI Taxonomy" id="438753"/>
    <lineage>
        <taxon>Bacteria</taxon>
        <taxon>Pseudomonadati</taxon>
        <taxon>Pseudomonadota</taxon>
        <taxon>Alphaproteobacteria</taxon>
        <taxon>Hyphomicrobiales</taxon>
        <taxon>Xanthobacteraceae</taxon>
        <taxon>Azorhizobium</taxon>
    </lineage>
</organism>
<protein>
    <recommendedName>
        <fullName evidence="1">Flagellar L-ring protein</fullName>
    </recommendedName>
    <alternativeName>
        <fullName evidence="1">Basal body L-ring protein</fullName>
    </alternativeName>
</protein>
<feature type="signal peptide" evidence="1">
    <location>
        <begin position="1"/>
        <end position="16"/>
    </location>
</feature>
<feature type="chain" id="PRO_1000080507" description="Flagellar L-ring protein">
    <location>
        <begin position="17"/>
        <end position="239"/>
    </location>
</feature>
<feature type="region of interest" description="Disordered" evidence="2">
    <location>
        <begin position="120"/>
        <end position="145"/>
    </location>
</feature>
<feature type="compositionally biased region" description="Polar residues" evidence="2">
    <location>
        <begin position="120"/>
        <end position="138"/>
    </location>
</feature>
<feature type="lipid moiety-binding region" description="N-palmitoyl cysteine" evidence="1">
    <location>
        <position position="17"/>
    </location>
</feature>
<feature type="lipid moiety-binding region" description="S-diacylglycerol cysteine" evidence="1">
    <location>
        <position position="17"/>
    </location>
</feature>
<dbReference type="EMBL" id="AP009384">
    <property type="protein sequence ID" value="BAF86628.1"/>
    <property type="molecule type" value="Genomic_DNA"/>
</dbReference>
<dbReference type="RefSeq" id="WP_012169161.1">
    <property type="nucleotide sequence ID" value="NC_009937.1"/>
</dbReference>
<dbReference type="SMR" id="A8IPJ4"/>
<dbReference type="STRING" id="438753.AZC_0630"/>
<dbReference type="KEGG" id="azc:AZC_0630"/>
<dbReference type="eggNOG" id="COG2063">
    <property type="taxonomic scope" value="Bacteria"/>
</dbReference>
<dbReference type="HOGENOM" id="CLU_069313_1_2_5"/>
<dbReference type="Proteomes" id="UP000000270">
    <property type="component" value="Chromosome"/>
</dbReference>
<dbReference type="GO" id="GO:0009427">
    <property type="term" value="C:bacterial-type flagellum basal body, distal rod, L ring"/>
    <property type="evidence" value="ECO:0007669"/>
    <property type="project" value="InterPro"/>
</dbReference>
<dbReference type="GO" id="GO:0009279">
    <property type="term" value="C:cell outer membrane"/>
    <property type="evidence" value="ECO:0007669"/>
    <property type="project" value="UniProtKB-SubCell"/>
</dbReference>
<dbReference type="GO" id="GO:0003774">
    <property type="term" value="F:cytoskeletal motor activity"/>
    <property type="evidence" value="ECO:0007669"/>
    <property type="project" value="InterPro"/>
</dbReference>
<dbReference type="GO" id="GO:0071973">
    <property type="term" value="P:bacterial-type flagellum-dependent cell motility"/>
    <property type="evidence" value="ECO:0007669"/>
    <property type="project" value="InterPro"/>
</dbReference>
<dbReference type="HAMAP" id="MF_00415">
    <property type="entry name" value="FlgH"/>
    <property type="match status" value="1"/>
</dbReference>
<dbReference type="InterPro" id="IPR000527">
    <property type="entry name" value="Flag_Lring"/>
</dbReference>
<dbReference type="PANTHER" id="PTHR34933">
    <property type="entry name" value="FLAGELLAR L-RING PROTEIN"/>
    <property type="match status" value="1"/>
</dbReference>
<dbReference type="PANTHER" id="PTHR34933:SF1">
    <property type="entry name" value="FLAGELLAR L-RING PROTEIN"/>
    <property type="match status" value="1"/>
</dbReference>
<dbReference type="Pfam" id="PF02107">
    <property type="entry name" value="FlgH"/>
    <property type="match status" value="1"/>
</dbReference>
<dbReference type="PRINTS" id="PR01008">
    <property type="entry name" value="FLGLRINGFLGH"/>
</dbReference>
<dbReference type="PROSITE" id="PS51257">
    <property type="entry name" value="PROKAR_LIPOPROTEIN"/>
    <property type="match status" value="1"/>
</dbReference>
<keyword id="KW-0975">Bacterial flagellum</keyword>
<keyword id="KW-0998">Cell outer membrane</keyword>
<keyword id="KW-0449">Lipoprotein</keyword>
<keyword id="KW-0472">Membrane</keyword>
<keyword id="KW-0564">Palmitate</keyword>
<keyword id="KW-1185">Reference proteome</keyword>
<keyword id="KW-0732">Signal</keyword>
<reference key="1">
    <citation type="submission" date="2007-04" db="EMBL/GenBank/DDBJ databases">
        <title>Complete genome sequence of the nitrogen-fixing bacterium Azorhizobium caulinodans ORS571.</title>
        <authorList>
            <person name="Lee K.B."/>
            <person name="Backer P.D."/>
            <person name="Aono T."/>
            <person name="Liu C.T."/>
            <person name="Suzuki S."/>
            <person name="Suzuki T."/>
            <person name="Kaneko T."/>
            <person name="Yamada M."/>
            <person name="Tabata S."/>
            <person name="Kupfer D.M."/>
            <person name="Najar F.Z."/>
            <person name="Wiley G.B."/>
            <person name="Roe B."/>
            <person name="Binnewies T."/>
            <person name="Ussery D."/>
            <person name="Vereecke D."/>
            <person name="Gevers D."/>
            <person name="Holsters M."/>
            <person name="Oyaizu H."/>
        </authorList>
    </citation>
    <scope>NUCLEOTIDE SEQUENCE [LARGE SCALE GENOMIC DNA]</scope>
    <source>
        <strain>ATCC 43989 / DSM 5975 / JCM 20966 / LMG 6465 / NBRC 14845 / NCIMB 13405 / ORS 571</strain>
    </source>
</reference>
<comment type="function">
    <text evidence="1">Assembles around the rod to form the L-ring and probably protects the motor/basal body from shearing forces during rotation.</text>
</comment>
<comment type="subunit">
    <text evidence="1">The basal body constitutes a major portion of the flagellar organelle and consists of four rings (L,P,S, and M) mounted on a central rod.</text>
</comment>
<comment type="subcellular location">
    <subcellularLocation>
        <location evidence="1">Cell outer membrane</location>
        <topology evidence="1">Lipid-anchor</topology>
    </subcellularLocation>
    <subcellularLocation>
        <location evidence="1">Bacterial flagellum basal body</location>
    </subcellularLocation>
</comment>
<comment type="similarity">
    <text evidence="1">Belongs to the FlgH family.</text>
</comment>
<evidence type="ECO:0000255" key="1">
    <source>
        <dbReference type="HAMAP-Rule" id="MF_00415"/>
    </source>
</evidence>
<evidence type="ECO:0000256" key="2">
    <source>
        <dbReference type="SAM" id="MobiDB-lite"/>
    </source>
</evidence>
<sequence length="239" mass="25383">MKPVILATASALLLAACQTNSYDSLAYGPTLTPVGQGLEAGRMPVPQPFQQAKERTFRSAYNLNSQSMYRALRAAAVGDVIRITIDIDDKAQLDNNTNRSRKSASDVGFASALNLSGFQSGSTSGSASGNLGLTGDTSTDGKGKIDRSEKLRLSLAAVVTEVMPNGNLVINGSQEILVNYEVRVLTLGGIVNPLDVTSNNTVAYDKVAEARISYAGRGRLNDVQQPAWGQRLFDAVNPM</sequence>
<name>FLGH_AZOC5</name>